<protein>
    <recommendedName>
        <fullName evidence="1">Siroheme synthase</fullName>
    </recommendedName>
    <domain>
        <recommendedName>
            <fullName evidence="1">Uroporphyrinogen-III C-methyltransferase</fullName>
            <shortName evidence="1">Urogen III methylase</shortName>
            <ecNumber evidence="1">2.1.1.107</ecNumber>
        </recommendedName>
        <alternativeName>
            <fullName evidence="1">SUMT</fullName>
        </alternativeName>
        <alternativeName>
            <fullName evidence="1">Uroporphyrinogen III methylase</fullName>
            <shortName evidence="1">UROM</shortName>
        </alternativeName>
    </domain>
    <domain>
        <recommendedName>
            <fullName evidence="1">Precorrin-2 dehydrogenase</fullName>
            <ecNumber evidence="1">1.3.1.76</ecNumber>
        </recommendedName>
    </domain>
    <domain>
        <recommendedName>
            <fullName evidence="1">Sirohydrochlorin ferrochelatase</fullName>
            <ecNumber evidence="1">4.99.1.4</ecNumber>
        </recommendedName>
    </domain>
</protein>
<feature type="chain" id="PRO_1000186937" description="Siroheme synthase">
    <location>
        <begin position="1"/>
        <end position="457"/>
    </location>
</feature>
<feature type="region of interest" description="Precorrin-2 dehydrogenase /sirohydrochlorin ferrochelatase" evidence="1">
    <location>
        <begin position="1"/>
        <end position="204"/>
    </location>
</feature>
<feature type="region of interest" description="Uroporphyrinogen-III C-methyltransferase" evidence="1">
    <location>
        <begin position="216"/>
        <end position="457"/>
    </location>
</feature>
<feature type="active site" description="Proton acceptor" evidence="1">
    <location>
        <position position="248"/>
    </location>
</feature>
<feature type="active site" description="Proton donor" evidence="1">
    <location>
        <position position="270"/>
    </location>
</feature>
<feature type="binding site" evidence="1">
    <location>
        <begin position="22"/>
        <end position="23"/>
    </location>
    <ligand>
        <name>NAD(+)</name>
        <dbReference type="ChEBI" id="CHEBI:57540"/>
    </ligand>
</feature>
<feature type="binding site" evidence="1">
    <location>
        <begin position="43"/>
        <end position="44"/>
    </location>
    <ligand>
        <name>NAD(+)</name>
        <dbReference type="ChEBI" id="CHEBI:57540"/>
    </ligand>
</feature>
<feature type="binding site" evidence="1">
    <location>
        <position position="225"/>
    </location>
    <ligand>
        <name>S-adenosyl-L-methionine</name>
        <dbReference type="ChEBI" id="CHEBI:59789"/>
    </ligand>
</feature>
<feature type="binding site" evidence="1">
    <location>
        <begin position="301"/>
        <end position="303"/>
    </location>
    <ligand>
        <name>S-adenosyl-L-methionine</name>
        <dbReference type="ChEBI" id="CHEBI:59789"/>
    </ligand>
</feature>
<feature type="binding site" evidence="1">
    <location>
        <position position="306"/>
    </location>
    <ligand>
        <name>S-adenosyl-L-methionine</name>
        <dbReference type="ChEBI" id="CHEBI:59789"/>
    </ligand>
</feature>
<feature type="binding site" evidence="1">
    <location>
        <begin position="331"/>
        <end position="332"/>
    </location>
    <ligand>
        <name>S-adenosyl-L-methionine</name>
        <dbReference type="ChEBI" id="CHEBI:59789"/>
    </ligand>
</feature>
<feature type="binding site" evidence="1">
    <location>
        <position position="382"/>
    </location>
    <ligand>
        <name>S-adenosyl-L-methionine</name>
        <dbReference type="ChEBI" id="CHEBI:59789"/>
    </ligand>
</feature>
<feature type="binding site" evidence="1">
    <location>
        <position position="411"/>
    </location>
    <ligand>
        <name>S-adenosyl-L-methionine</name>
        <dbReference type="ChEBI" id="CHEBI:59789"/>
    </ligand>
</feature>
<feature type="modified residue" description="Phosphoserine" evidence="1">
    <location>
        <position position="128"/>
    </location>
</feature>
<proteinExistence type="inferred from homology"/>
<reference key="1">
    <citation type="journal article" date="2009" name="PLoS Genet.">
        <title>Organised genome dynamics in the Escherichia coli species results in highly diverse adaptive paths.</title>
        <authorList>
            <person name="Touchon M."/>
            <person name="Hoede C."/>
            <person name="Tenaillon O."/>
            <person name="Barbe V."/>
            <person name="Baeriswyl S."/>
            <person name="Bidet P."/>
            <person name="Bingen E."/>
            <person name="Bonacorsi S."/>
            <person name="Bouchier C."/>
            <person name="Bouvet O."/>
            <person name="Calteau A."/>
            <person name="Chiapello H."/>
            <person name="Clermont O."/>
            <person name="Cruveiller S."/>
            <person name="Danchin A."/>
            <person name="Diard M."/>
            <person name="Dossat C."/>
            <person name="Karoui M.E."/>
            <person name="Frapy E."/>
            <person name="Garry L."/>
            <person name="Ghigo J.M."/>
            <person name="Gilles A.M."/>
            <person name="Johnson J."/>
            <person name="Le Bouguenec C."/>
            <person name="Lescat M."/>
            <person name="Mangenot S."/>
            <person name="Martinez-Jehanne V."/>
            <person name="Matic I."/>
            <person name="Nassif X."/>
            <person name="Oztas S."/>
            <person name="Petit M.A."/>
            <person name="Pichon C."/>
            <person name="Rouy Z."/>
            <person name="Ruf C.S."/>
            <person name="Schneider D."/>
            <person name="Tourret J."/>
            <person name="Vacherie B."/>
            <person name="Vallenet D."/>
            <person name="Medigue C."/>
            <person name="Rocha E.P.C."/>
            <person name="Denamur E."/>
        </authorList>
    </citation>
    <scope>NUCLEOTIDE SEQUENCE [LARGE SCALE GENOMIC DNA]</scope>
    <source>
        <strain>S88 / ExPEC</strain>
    </source>
</reference>
<dbReference type="EC" id="2.1.1.107" evidence="1"/>
<dbReference type="EC" id="1.3.1.76" evidence="1"/>
<dbReference type="EC" id="4.99.1.4" evidence="1"/>
<dbReference type="EMBL" id="CU928161">
    <property type="protein sequence ID" value="CAR04974.1"/>
    <property type="molecule type" value="Genomic_DNA"/>
</dbReference>
<dbReference type="RefSeq" id="WP_000349869.1">
    <property type="nucleotide sequence ID" value="NC_011742.1"/>
</dbReference>
<dbReference type="SMR" id="B7MCY5"/>
<dbReference type="KEGG" id="ecz:ECS88_3759"/>
<dbReference type="HOGENOM" id="CLU_011276_2_0_6"/>
<dbReference type="UniPathway" id="UPA00148">
    <property type="reaction ID" value="UER00211"/>
</dbReference>
<dbReference type="UniPathway" id="UPA00148">
    <property type="reaction ID" value="UER00222"/>
</dbReference>
<dbReference type="UniPathway" id="UPA00262">
    <property type="reaction ID" value="UER00211"/>
</dbReference>
<dbReference type="UniPathway" id="UPA00262">
    <property type="reaction ID" value="UER00222"/>
</dbReference>
<dbReference type="UniPathway" id="UPA00262">
    <property type="reaction ID" value="UER00376"/>
</dbReference>
<dbReference type="Proteomes" id="UP000000747">
    <property type="component" value="Chromosome"/>
</dbReference>
<dbReference type="GO" id="GO:0051287">
    <property type="term" value="F:NAD binding"/>
    <property type="evidence" value="ECO:0007669"/>
    <property type="project" value="InterPro"/>
</dbReference>
<dbReference type="GO" id="GO:0043115">
    <property type="term" value="F:precorrin-2 dehydrogenase activity"/>
    <property type="evidence" value="ECO:0007669"/>
    <property type="project" value="UniProtKB-UniRule"/>
</dbReference>
<dbReference type="GO" id="GO:0051266">
    <property type="term" value="F:sirohydrochlorin ferrochelatase activity"/>
    <property type="evidence" value="ECO:0007669"/>
    <property type="project" value="UniProtKB-EC"/>
</dbReference>
<dbReference type="GO" id="GO:0004851">
    <property type="term" value="F:uroporphyrin-III C-methyltransferase activity"/>
    <property type="evidence" value="ECO:0007669"/>
    <property type="project" value="UniProtKB-UniRule"/>
</dbReference>
<dbReference type="GO" id="GO:0009236">
    <property type="term" value="P:cobalamin biosynthetic process"/>
    <property type="evidence" value="ECO:0007669"/>
    <property type="project" value="UniProtKB-UniRule"/>
</dbReference>
<dbReference type="GO" id="GO:0032259">
    <property type="term" value="P:methylation"/>
    <property type="evidence" value="ECO:0007669"/>
    <property type="project" value="UniProtKB-KW"/>
</dbReference>
<dbReference type="GO" id="GO:0019354">
    <property type="term" value="P:siroheme biosynthetic process"/>
    <property type="evidence" value="ECO:0007669"/>
    <property type="project" value="UniProtKB-UniRule"/>
</dbReference>
<dbReference type="CDD" id="cd11642">
    <property type="entry name" value="SUMT"/>
    <property type="match status" value="1"/>
</dbReference>
<dbReference type="FunFam" id="1.10.8.210:FF:000001">
    <property type="entry name" value="Siroheme synthase"/>
    <property type="match status" value="1"/>
</dbReference>
<dbReference type="FunFam" id="3.30.160.110:FF:000001">
    <property type="entry name" value="Siroheme synthase"/>
    <property type="match status" value="1"/>
</dbReference>
<dbReference type="FunFam" id="3.30.950.10:FF:000001">
    <property type="entry name" value="Siroheme synthase"/>
    <property type="match status" value="1"/>
</dbReference>
<dbReference type="FunFam" id="3.40.1010.10:FF:000001">
    <property type="entry name" value="Siroheme synthase"/>
    <property type="match status" value="1"/>
</dbReference>
<dbReference type="FunFam" id="3.40.50.720:FF:000092">
    <property type="entry name" value="Siroheme synthase"/>
    <property type="match status" value="1"/>
</dbReference>
<dbReference type="Gene3D" id="3.40.1010.10">
    <property type="entry name" value="Cobalt-precorrin-4 Transmethylase, Domain 1"/>
    <property type="match status" value="1"/>
</dbReference>
<dbReference type="Gene3D" id="3.30.950.10">
    <property type="entry name" value="Methyltransferase, Cobalt-precorrin-4 Transmethylase, Domain 2"/>
    <property type="match status" value="1"/>
</dbReference>
<dbReference type="Gene3D" id="3.40.50.720">
    <property type="entry name" value="NAD(P)-binding Rossmann-like Domain"/>
    <property type="match status" value="1"/>
</dbReference>
<dbReference type="Gene3D" id="1.10.8.210">
    <property type="entry name" value="Sirohaem synthase, dimerisation domain"/>
    <property type="match status" value="1"/>
</dbReference>
<dbReference type="Gene3D" id="3.30.160.110">
    <property type="entry name" value="Siroheme synthase, domain 2"/>
    <property type="match status" value="1"/>
</dbReference>
<dbReference type="HAMAP" id="MF_01646">
    <property type="entry name" value="Siroheme_synth"/>
    <property type="match status" value="1"/>
</dbReference>
<dbReference type="InterPro" id="IPR000878">
    <property type="entry name" value="4pyrrol_Mease"/>
</dbReference>
<dbReference type="InterPro" id="IPR035996">
    <property type="entry name" value="4pyrrol_Methylase_sf"/>
</dbReference>
<dbReference type="InterPro" id="IPR014777">
    <property type="entry name" value="4pyrrole_Mease_sub1"/>
</dbReference>
<dbReference type="InterPro" id="IPR014776">
    <property type="entry name" value="4pyrrole_Mease_sub2"/>
</dbReference>
<dbReference type="InterPro" id="IPR006366">
    <property type="entry name" value="CobA/CysG_C"/>
</dbReference>
<dbReference type="InterPro" id="IPR036291">
    <property type="entry name" value="NAD(P)-bd_dom_sf"/>
</dbReference>
<dbReference type="InterPro" id="IPR050161">
    <property type="entry name" value="Siro_Cobalamin_biosynth"/>
</dbReference>
<dbReference type="InterPro" id="IPR037115">
    <property type="entry name" value="Sirohaem_synt_dimer_dom_sf"/>
</dbReference>
<dbReference type="InterPro" id="IPR012409">
    <property type="entry name" value="Sirohaem_synth"/>
</dbReference>
<dbReference type="InterPro" id="IPR028281">
    <property type="entry name" value="Sirohaem_synthase_central"/>
</dbReference>
<dbReference type="InterPro" id="IPR019478">
    <property type="entry name" value="Sirohaem_synthase_dimer_dom"/>
</dbReference>
<dbReference type="InterPro" id="IPR006367">
    <property type="entry name" value="Sirohaem_synthase_N"/>
</dbReference>
<dbReference type="InterPro" id="IPR003043">
    <property type="entry name" value="Uropor_MeTrfase_CS"/>
</dbReference>
<dbReference type="NCBIfam" id="TIGR01469">
    <property type="entry name" value="cobA_cysG_Cterm"/>
    <property type="match status" value="1"/>
</dbReference>
<dbReference type="NCBIfam" id="TIGR01470">
    <property type="entry name" value="cysG_Nterm"/>
    <property type="match status" value="1"/>
</dbReference>
<dbReference type="NCBIfam" id="NF004790">
    <property type="entry name" value="PRK06136.1"/>
    <property type="match status" value="1"/>
</dbReference>
<dbReference type="NCBIfam" id="NF007922">
    <property type="entry name" value="PRK10637.1"/>
    <property type="match status" value="1"/>
</dbReference>
<dbReference type="PANTHER" id="PTHR45790:SF1">
    <property type="entry name" value="SIROHEME SYNTHASE"/>
    <property type="match status" value="1"/>
</dbReference>
<dbReference type="PANTHER" id="PTHR45790">
    <property type="entry name" value="SIROHEME SYNTHASE-RELATED"/>
    <property type="match status" value="1"/>
</dbReference>
<dbReference type="Pfam" id="PF10414">
    <property type="entry name" value="CysG_dimeriser"/>
    <property type="match status" value="1"/>
</dbReference>
<dbReference type="Pfam" id="PF13241">
    <property type="entry name" value="NAD_binding_7"/>
    <property type="match status" value="1"/>
</dbReference>
<dbReference type="Pfam" id="PF14824">
    <property type="entry name" value="Sirohm_synth_M"/>
    <property type="match status" value="1"/>
</dbReference>
<dbReference type="Pfam" id="PF00590">
    <property type="entry name" value="TP_methylase"/>
    <property type="match status" value="1"/>
</dbReference>
<dbReference type="PIRSF" id="PIRSF036426">
    <property type="entry name" value="Sirohaem_synth"/>
    <property type="match status" value="1"/>
</dbReference>
<dbReference type="SUPFAM" id="SSF51735">
    <property type="entry name" value="NAD(P)-binding Rossmann-fold domains"/>
    <property type="match status" value="1"/>
</dbReference>
<dbReference type="SUPFAM" id="SSF75615">
    <property type="entry name" value="Siroheme synthase middle domains-like"/>
    <property type="match status" value="1"/>
</dbReference>
<dbReference type="SUPFAM" id="SSF53790">
    <property type="entry name" value="Tetrapyrrole methylase"/>
    <property type="match status" value="1"/>
</dbReference>
<dbReference type="PROSITE" id="PS00839">
    <property type="entry name" value="SUMT_1"/>
    <property type="match status" value="1"/>
</dbReference>
<dbReference type="PROSITE" id="PS00840">
    <property type="entry name" value="SUMT_2"/>
    <property type="match status" value="1"/>
</dbReference>
<name>CYSG_ECO45</name>
<comment type="function">
    <text evidence="1">Multifunctional enzyme that catalyzes the SAM-dependent methylations of uroporphyrinogen III at position C-2 and C-7 to form precorrin-2 via precorrin-1. Then it catalyzes the NAD-dependent ring dehydrogenation of precorrin-2 to yield sirohydrochlorin. Finally, it catalyzes the ferrochelation of sirohydrochlorin to yield siroheme.</text>
</comment>
<comment type="catalytic activity">
    <reaction evidence="1">
        <text>uroporphyrinogen III + 2 S-adenosyl-L-methionine = precorrin-2 + 2 S-adenosyl-L-homocysteine + H(+)</text>
        <dbReference type="Rhea" id="RHEA:32459"/>
        <dbReference type="ChEBI" id="CHEBI:15378"/>
        <dbReference type="ChEBI" id="CHEBI:57308"/>
        <dbReference type="ChEBI" id="CHEBI:57856"/>
        <dbReference type="ChEBI" id="CHEBI:58827"/>
        <dbReference type="ChEBI" id="CHEBI:59789"/>
        <dbReference type="EC" id="2.1.1.107"/>
    </reaction>
</comment>
<comment type="catalytic activity">
    <reaction evidence="1">
        <text>precorrin-2 + NAD(+) = sirohydrochlorin + NADH + 2 H(+)</text>
        <dbReference type="Rhea" id="RHEA:15613"/>
        <dbReference type="ChEBI" id="CHEBI:15378"/>
        <dbReference type="ChEBI" id="CHEBI:57540"/>
        <dbReference type="ChEBI" id="CHEBI:57945"/>
        <dbReference type="ChEBI" id="CHEBI:58351"/>
        <dbReference type="ChEBI" id="CHEBI:58827"/>
        <dbReference type="EC" id="1.3.1.76"/>
    </reaction>
</comment>
<comment type="catalytic activity">
    <reaction evidence="1">
        <text>siroheme + 2 H(+) = sirohydrochlorin + Fe(2+)</text>
        <dbReference type="Rhea" id="RHEA:24360"/>
        <dbReference type="ChEBI" id="CHEBI:15378"/>
        <dbReference type="ChEBI" id="CHEBI:29033"/>
        <dbReference type="ChEBI" id="CHEBI:58351"/>
        <dbReference type="ChEBI" id="CHEBI:60052"/>
        <dbReference type="EC" id="4.99.1.4"/>
    </reaction>
</comment>
<comment type="pathway">
    <text evidence="1">Cofactor biosynthesis; adenosylcobalamin biosynthesis; precorrin-2 from uroporphyrinogen III: step 1/1.</text>
</comment>
<comment type="pathway">
    <text evidence="1">Cofactor biosynthesis; adenosylcobalamin biosynthesis; sirohydrochlorin from precorrin-2: step 1/1.</text>
</comment>
<comment type="pathway">
    <text evidence="1">Porphyrin-containing compound metabolism; siroheme biosynthesis; precorrin-2 from uroporphyrinogen III: step 1/1.</text>
</comment>
<comment type="pathway">
    <text evidence="1">Porphyrin-containing compound metabolism; siroheme biosynthesis; siroheme from sirohydrochlorin: step 1/1.</text>
</comment>
<comment type="pathway">
    <text evidence="1">Porphyrin-containing compound metabolism; siroheme biosynthesis; sirohydrochlorin from precorrin-2: step 1/1.</text>
</comment>
<comment type="similarity">
    <text evidence="1">In the N-terminal section; belongs to the precorrin-2 dehydrogenase / sirohydrochlorin ferrochelatase family.</text>
</comment>
<comment type="similarity">
    <text evidence="1">In the C-terminal section; belongs to the precorrin methyltransferase family.</text>
</comment>
<accession>B7MCY5</accession>
<evidence type="ECO:0000255" key="1">
    <source>
        <dbReference type="HAMAP-Rule" id="MF_01646"/>
    </source>
</evidence>
<organism>
    <name type="scientific">Escherichia coli O45:K1 (strain S88 / ExPEC)</name>
    <dbReference type="NCBI Taxonomy" id="585035"/>
    <lineage>
        <taxon>Bacteria</taxon>
        <taxon>Pseudomonadati</taxon>
        <taxon>Pseudomonadota</taxon>
        <taxon>Gammaproteobacteria</taxon>
        <taxon>Enterobacterales</taxon>
        <taxon>Enterobacteriaceae</taxon>
        <taxon>Escherichia</taxon>
    </lineage>
</organism>
<sequence>MDHLPIFCQLRDRDCLIVGGGDVAERKARLLLDAGARLTVNALAFIPQFTAWADAGMLTLVEGPFDESLLDTCWLAIAATDDDALNQRVSEAAESRRIFCNVVDAPKAASFIMPSIIDRSPLMVAVSSGGTSPVLARLLREKLESLLPLHLGQVAKYAGQLRGRVKQQFATMGERRRFWEKLFVNDRLAQSLANNDQKAITETTEQLINEPLDHRGEVVLVGAGPGDAGLLTLKGLQQIQQADVVVYDRLVSDDIMNLIRRDADRVFVGKRAGYHCVPQEEINQILLREAQKGKRVVRLKGGDPFIFGRGGEELETLCNAGIPFSVVPGITAASGCSAYSGIPLTHRDYAQSVRLITGHLKTGGELDWENLAAEKQTLVFYMGLNQAATIQQKLIEYGMPGEMPVAIVENGTAVTQRVIDGTLTQLGELAQQMNSPSLIIIGRVVGLRDKLNWFSNH</sequence>
<gene>
    <name evidence="1" type="primary">cysG</name>
    <name type="ordered locus">ECS88_3759</name>
</gene>
<keyword id="KW-0169">Cobalamin biosynthesis</keyword>
<keyword id="KW-0456">Lyase</keyword>
<keyword id="KW-0489">Methyltransferase</keyword>
<keyword id="KW-0511">Multifunctional enzyme</keyword>
<keyword id="KW-0520">NAD</keyword>
<keyword id="KW-0560">Oxidoreductase</keyword>
<keyword id="KW-0597">Phosphoprotein</keyword>
<keyword id="KW-0627">Porphyrin biosynthesis</keyword>
<keyword id="KW-1185">Reference proteome</keyword>
<keyword id="KW-0949">S-adenosyl-L-methionine</keyword>
<keyword id="KW-0808">Transferase</keyword>